<gene>
    <name type="primary">Epsilon</name>
</gene>
<feature type="chain" id="PRO_0000165231" description="Derepression protein">
    <location>
        <begin position="1"/>
        <end position="95"/>
    </location>
</feature>
<comment type="function">
    <text>Required for derepression (induction) of the P2 prophage helper by P4.</text>
</comment>
<organism>
    <name type="scientific">Enterobacteria phage P4</name>
    <name type="common">Bacteriophage P4</name>
    <dbReference type="NCBI Taxonomy" id="10680"/>
    <lineage>
        <taxon>Viruses</taxon>
        <taxon>Duplodnaviria</taxon>
        <taxon>Heunggongvirae</taxon>
        <taxon>Uroviricota</taxon>
        <taxon>Caudoviricetes</taxon>
    </lineage>
</organism>
<proteinExistence type="predicted"/>
<sequence>MRNKKAPQTVSARHDAREHLSIEAYHKLNRASAVSRFVGGDLIHRELSGLHQLYIPHIFSYLNEDIDFVLNELKAKGLCRDFLAQQKDRGDRTHV</sequence>
<name>VEPS_BPP4</name>
<reference key="1">
    <citation type="journal article" date="1984" name="Nucleic Acids Res.">
        <title>Nucleotide sequence of the essential region of bacteriophage P4.</title>
        <authorList>
            <person name="Lin C.-S."/>
        </authorList>
    </citation>
    <scope>NUCLEOTIDE SEQUENCE [GENOMIC DNA]</scope>
</reference>
<reference key="2">
    <citation type="journal article" date="1990" name="Nucleic Acids Res.">
        <title>DNA sequence of satellite bacteriophage P4.</title>
        <authorList>
            <person name="Halling C."/>
            <person name="Calendar R."/>
            <person name="Christie G.E."/>
            <person name="Dale E.C."/>
            <person name="Deho G."/>
            <person name="Finkel S."/>
            <person name="Flensburg J."/>
            <person name="Ghisotti D."/>
            <person name="Kahn M.L."/>
            <person name="Lane K.B."/>
            <person name="Lin C.-S."/>
            <person name="Lindqvist B.H."/>
            <person name="Pierson L.S."/>
            <person name="Six E.W."/>
            <person name="Sunshine M.G."/>
            <person name="Ziermann R."/>
        </authorList>
    </citation>
    <scope>NUCLEOTIDE SEQUENCE [LARGE SCALE GENOMIC DNA]</scope>
</reference>
<keyword id="KW-0244">Early protein</keyword>
<keyword id="KW-1185">Reference proteome</keyword>
<organismHost>
    <name type="scientific">Escherichia coli</name>
    <dbReference type="NCBI Taxonomy" id="562"/>
</organismHost>
<accession>P05463</accession>
<dbReference type="EMBL" id="X02534">
    <property type="protein sequence ID" value="CAA26379.1"/>
    <property type="molecule type" value="Genomic_DNA"/>
</dbReference>
<dbReference type="EMBL" id="X51522">
    <property type="protein sequence ID" value="CAA35901.1"/>
    <property type="molecule type" value="Genomic_DNA"/>
</dbReference>
<dbReference type="PIR" id="E23878">
    <property type="entry name" value="DEBPP4"/>
</dbReference>
<dbReference type="RefSeq" id="NP_042039.1">
    <property type="nucleotide sequence ID" value="NC_001609.1"/>
</dbReference>
<dbReference type="KEGG" id="vg:1261085"/>
<dbReference type="Proteomes" id="UP000009093">
    <property type="component" value="Genome"/>
</dbReference>
<protein>
    <recommendedName>
        <fullName>Derepression protein</fullName>
    </recommendedName>
</protein>